<protein>
    <recommendedName>
        <fullName>Ubiquitin-conjugating enzyme E2 2</fullName>
        <ecNumber>2.3.2.23</ecNumber>
    </recommendedName>
    <alternativeName>
        <fullName>E2 ubiquitin-conjugating enzyme 2</fullName>
    </alternativeName>
    <alternativeName>
        <fullName>Ubiquitin carrier protein UBC2</fullName>
    </alternativeName>
    <alternativeName>
        <fullName>Ubiquitin-protein ligase UBC2</fullName>
    </alternativeName>
</protein>
<dbReference type="EC" id="2.3.2.23"/>
<dbReference type="EMBL" id="CR382135">
    <property type="protein sequence ID" value="CAG86361.1"/>
    <property type="molecule type" value="Genomic_DNA"/>
</dbReference>
<dbReference type="RefSeq" id="XP_458283.1">
    <property type="nucleotide sequence ID" value="XM_458283.1"/>
</dbReference>
<dbReference type="SMR" id="Q6BU36"/>
<dbReference type="FunCoup" id="Q6BU36">
    <property type="interactions" value="842"/>
</dbReference>
<dbReference type="STRING" id="284592.Q6BU36"/>
<dbReference type="GeneID" id="2900043"/>
<dbReference type="KEGG" id="dha:DEHA2C13904g"/>
<dbReference type="VEuPathDB" id="FungiDB:DEHA2C13904g"/>
<dbReference type="eggNOG" id="KOG0419">
    <property type="taxonomic scope" value="Eukaryota"/>
</dbReference>
<dbReference type="HOGENOM" id="CLU_030988_10_2_1"/>
<dbReference type="InParanoid" id="Q6BU36"/>
<dbReference type="OMA" id="DHKSQYI"/>
<dbReference type="OrthoDB" id="9984419at2759"/>
<dbReference type="UniPathway" id="UPA00143"/>
<dbReference type="Proteomes" id="UP000000599">
    <property type="component" value="Chromosome C"/>
</dbReference>
<dbReference type="GO" id="GO:0000781">
    <property type="term" value="C:chromosome, telomeric region"/>
    <property type="evidence" value="ECO:0007669"/>
    <property type="project" value="GOC"/>
</dbReference>
<dbReference type="GO" id="GO:0005737">
    <property type="term" value="C:cytoplasm"/>
    <property type="evidence" value="ECO:0007669"/>
    <property type="project" value="UniProtKB-SubCell"/>
</dbReference>
<dbReference type="GO" id="GO:0033503">
    <property type="term" value="C:HULC complex"/>
    <property type="evidence" value="ECO:0007669"/>
    <property type="project" value="EnsemblFungi"/>
</dbReference>
<dbReference type="GO" id="GO:1990304">
    <property type="term" value="C:MUB1-RAD6-UBR2 ubiquitin ligase complex"/>
    <property type="evidence" value="ECO:0007669"/>
    <property type="project" value="EnsemblFungi"/>
</dbReference>
<dbReference type="GO" id="GO:0005634">
    <property type="term" value="C:nucleus"/>
    <property type="evidence" value="ECO:0007669"/>
    <property type="project" value="UniProtKB-SubCell"/>
</dbReference>
<dbReference type="GO" id="GO:0097505">
    <property type="term" value="C:Rad6-Rad18 complex"/>
    <property type="evidence" value="ECO:0007669"/>
    <property type="project" value="EnsemblFungi"/>
</dbReference>
<dbReference type="GO" id="GO:1990305">
    <property type="term" value="C:RAD6-UBR2 ubiquitin ligase complex"/>
    <property type="evidence" value="ECO:0007669"/>
    <property type="project" value="EnsemblFungi"/>
</dbReference>
<dbReference type="GO" id="GO:1990303">
    <property type="term" value="C:UBR1-RAD6 ubiquitin ligase complex"/>
    <property type="evidence" value="ECO:0007669"/>
    <property type="project" value="EnsemblFungi"/>
</dbReference>
<dbReference type="GO" id="GO:0005524">
    <property type="term" value="F:ATP binding"/>
    <property type="evidence" value="ECO:0007669"/>
    <property type="project" value="UniProtKB-KW"/>
</dbReference>
<dbReference type="GO" id="GO:0070628">
    <property type="term" value="F:proteasome binding"/>
    <property type="evidence" value="ECO:0007669"/>
    <property type="project" value="EnsemblFungi"/>
</dbReference>
<dbReference type="GO" id="GO:0003697">
    <property type="term" value="F:single-stranded DNA binding"/>
    <property type="evidence" value="ECO:0007669"/>
    <property type="project" value="EnsemblFungi"/>
</dbReference>
<dbReference type="GO" id="GO:0017116">
    <property type="term" value="F:single-stranded DNA helicase activity"/>
    <property type="evidence" value="ECO:0007669"/>
    <property type="project" value="EnsemblFungi"/>
</dbReference>
<dbReference type="GO" id="GO:0061631">
    <property type="term" value="F:ubiquitin conjugating enzyme activity"/>
    <property type="evidence" value="ECO:0007669"/>
    <property type="project" value="UniProtKB-EC"/>
</dbReference>
<dbReference type="GO" id="GO:0034620">
    <property type="term" value="P:cellular response to unfolded protein"/>
    <property type="evidence" value="ECO:0007669"/>
    <property type="project" value="EnsemblFungi"/>
</dbReference>
<dbReference type="GO" id="GO:0071629">
    <property type="term" value="P:cytoplasm protein quality control by the ubiquitin-proteasome system"/>
    <property type="evidence" value="ECO:0007669"/>
    <property type="project" value="EnsemblFungi"/>
</dbReference>
<dbReference type="GO" id="GO:0006353">
    <property type="term" value="P:DNA-templated transcription termination"/>
    <property type="evidence" value="ECO:0007669"/>
    <property type="project" value="EnsemblFungi"/>
</dbReference>
<dbReference type="GO" id="GO:0000724">
    <property type="term" value="P:double-strand break repair via homologous recombination"/>
    <property type="evidence" value="ECO:0007669"/>
    <property type="project" value="EnsemblFungi"/>
</dbReference>
<dbReference type="GO" id="GO:0036503">
    <property type="term" value="P:ERAD pathway"/>
    <property type="evidence" value="ECO:0007669"/>
    <property type="project" value="EnsemblFungi"/>
</dbReference>
<dbReference type="GO" id="GO:0042275">
    <property type="term" value="P:error-free postreplication DNA repair"/>
    <property type="evidence" value="ECO:0007669"/>
    <property type="project" value="EnsemblFungi"/>
</dbReference>
<dbReference type="GO" id="GO:0070987">
    <property type="term" value="P:error-free translesion synthesis"/>
    <property type="evidence" value="ECO:0007669"/>
    <property type="project" value="EnsemblFungi"/>
</dbReference>
<dbReference type="GO" id="GO:0042276">
    <property type="term" value="P:error-prone translesion synthesis"/>
    <property type="evidence" value="ECO:0007669"/>
    <property type="project" value="EnsemblFungi"/>
</dbReference>
<dbReference type="GO" id="GO:0042138">
    <property type="term" value="P:meiotic DNA double-strand break formation"/>
    <property type="evidence" value="ECO:0007669"/>
    <property type="project" value="EnsemblFungi"/>
</dbReference>
<dbReference type="GO" id="GO:0031571">
    <property type="term" value="P:mitotic G1 DNA damage checkpoint signaling"/>
    <property type="evidence" value="ECO:0007669"/>
    <property type="project" value="EnsemblFungi"/>
</dbReference>
<dbReference type="GO" id="GO:2000639">
    <property type="term" value="P:negative regulation of SREBP signaling pathway"/>
    <property type="evidence" value="ECO:0007669"/>
    <property type="project" value="EnsemblFungi"/>
</dbReference>
<dbReference type="GO" id="GO:0016567">
    <property type="term" value="P:protein ubiquitination"/>
    <property type="evidence" value="ECO:0007669"/>
    <property type="project" value="UniProtKB-UniPathway"/>
</dbReference>
<dbReference type="GO" id="GO:0090089">
    <property type="term" value="P:regulation of dipeptide transport"/>
    <property type="evidence" value="ECO:0007669"/>
    <property type="project" value="EnsemblFungi"/>
</dbReference>
<dbReference type="GO" id="GO:0009302">
    <property type="term" value="P:sno(s)RNA transcription"/>
    <property type="evidence" value="ECO:0007669"/>
    <property type="project" value="EnsemblFungi"/>
</dbReference>
<dbReference type="GO" id="GO:0030435">
    <property type="term" value="P:sporulation resulting in formation of a cellular spore"/>
    <property type="evidence" value="ECO:0007669"/>
    <property type="project" value="UniProtKB-KW"/>
</dbReference>
<dbReference type="GO" id="GO:0120174">
    <property type="term" value="P:stress-induced homeostatically regulated protein degradation pathway"/>
    <property type="evidence" value="ECO:0007669"/>
    <property type="project" value="EnsemblFungi"/>
</dbReference>
<dbReference type="GO" id="GO:0031509">
    <property type="term" value="P:subtelomeric heterochromatin formation"/>
    <property type="evidence" value="ECO:0007669"/>
    <property type="project" value="EnsemblFungi"/>
</dbReference>
<dbReference type="GO" id="GO:0000722">
    <property type="term" value="P:telomere maintenance via recombination"/>
    <property type="evidence" value="ECO:0007669"/>
    <property type="project" value="EnsemblFungi"/>
</dbReference>
<dbReference type="GO" id="GO:0006366">
    <property type="term" value="P:transcription by RNA polymerase II"/>
    <property type="evidence" value="ECO:0007669"/>
    <property type="project" value="EnsemblFungi"/>
</dbReference>
<dbReference type="GO" id="GO:0071596">
    <property type="term" value="P:ubiquitin-dependent protein catabolic process via the N-end rule pathway"/>
    <property type="evidence" value="ECO:0007669"/>
    <property type="project" value="EnsemblFungi"/>
</dbReference>
<dbReference type="CDD" id="cd23790">
    <property type="entry name" value="UBCc_UBE2A_2B"/>
    <property type="match status" value="1"/>
</dbReference>
<dbReference type="FunFam" id="3.10.110.10:FF:000007">
    <property type="entry name" value="Ubiquitin-conjugating enzyme E2 2"/>
    <property type="match status" value="1"/>
</dbReference>
<dbReference type="Gene3D" id="3.10.110.10">
    <property type="entry name" value="Ubiquitin Conjugating Enzyme"/>
    <property type="match status" value="1"/>
</dbReference>
<dbReference type="InterPro" id="IPR050113">
    <property type="entry name" value="Ub_conjugating_enzyme"/>
</dbReference>
<dbReference type="InterPro" id="IPR000608">
    <property type="entry name" value="UBQ-conjugat_E2_core"/>
</dbReference>
<dbReference type="InterPro" id="IPR023313">
    <property type="entry name" value="UBQ-conjugating_AS"/>
</dbReference>
<dbReference type="InterPro" id="IPR016135">
    <property type="entry name" value="UBQ-conjugating_enzyme/RWD"/>
</dbReference>
<dbReference type="PANTHER" id="PTHR24067">
    <property type="entry name" value="UBIQUITIN-CONJUGATING ENZYME E2"/>
    <property type="match status" value="1"/>
</dbReference>
<dbReference type="Pfam" id="PF00179">
    <property type="entry name" value="UQ_con"/>
    <property type="match status" value="1"/>
</dbReference>
<dbReference type="SMART" id="SM00212">
    <property type="entry name" value="UBCc"/>
    <property type="match status" value="1"/>
</dbReference>
<dbReference type="SUPFAM" id="SSF54495">
    <property type="entry name" value="UBC-like"/>
    <property type="match status" value="1"/>
</dbReference>
<dbReference type="PROSITE" id="PS00183">
    <property type="entry name" value="UBC_1"/>
    <property type="match status" value="1"/>
</dbReference>
<dbReference type="PROSITE" id="PS50127">
    <property type="entry name" value="UBC_2"/>
    <property type="match status" value="1"/>
</dbReference>
<organism>
    <name type="scientific">Debaryomyces hansenii (strain ATCC 36239 / CBS 767 / BCRC 21394 / JCM 1990 / NBRC 0083 / IGC 2968)</name>
    <name type="common">Yeast</name>
    <name type="synonym">Torulaspora hansenii</name>
    <dbReference type="NCBI Taxonomy" id="284592"/>
    <lineage>
        <taxon>Eukaryota</taxon>
        <taxon>Fungi</taxon>
        <taxon>Dikarya</taxon>
        <taxon>Ascomycota</taxon>
        <taxon>Saccharomycotina</taxon>
        <taxon>Pichiomycetes</taxon>
        <taxon>Debaryomycetaceae</taxon>
        <taxon>Debaryomyces</taxon>
    </lineage>
</organism>
<proteinExistence type="inferred from homology"/>
<accession>Q6BU36</accession>
<sequence length="168" mass="19187">MSTPAKRRLMRDFKRMQQDAPSGVSASPLPDNVMSWNAVIIGPADTPFEDGTFRLILQFDEQYPNKPPSVKFISEMFHPNVYASGELCLDILQNRWSPTYDVSSILTSIQSLLNDPNISSPANVEAANLYKDHRSQYIKRVRETVENSWNEDDEDEDEDEDEDIDDAE</sequence>
<comment type="function">
    <text evidence="2">Catalyzes the covalent attachment of ubiquitin to other proteins. Plays a role in transcription regulation by catalyzing the monoubiquitination of histone H2B to form H2BK123ub1. H2BK123ub1 gives a specific tag for epigenetic transcriptional activation and is also a prerequisite for H3K4me and H3K79me formation. Also involved in postreplication repair of UV-damaged DNA, in N-end rule-dependent protein degradation and in sporulation.</text>
</comment>
<comment type="catalytic activity">
    <reaction evidence="2 3">
        <text>S-ubiquitinyl-[E1 ubiquitin-activating enzyme]-L-cysteine + [E2 ubiquitin-conjugating enzyme]-L-cysteine = [E1 ubiquitin-activating enzyme]-L-cysteine + S-ubiquitinyl-[E2 ubiquitin-conjugating enzyme]-L-cysteine.</text>
        <dbReference type="EC" id="2.3.2.23"/>
    </reaction>
</comment>
<comment type="pathway">
    <text evidence="2">Protein modification; protein ubiquitination.</text>
</comment>
<comment type="subcellular location">
    <subcellularLocation>
        <location evidence="1">Cytoplasm</location>
    </subcellularLocation>
    <subcellularLocation>
        <location evidence="1">Nucleus</location>
    </subcellularLocation>
</comment>
<comment type="similarity">
    <text evidence="2">Belongs to the ubiquitin-conjugating enzyme family.</text>
</comment>
<name>UBC2_DEBHA</name>
<keyword id="KW-0067">ATP-binding</keyword>
<keyword id="KW-0156">Chromatin regulator</keyword>
<keyword id="KW-0963">Cytoplasm</keyword>
<keyword id="KW-0227">DNA damage</keyword>
<keyword id="KW-0234">DNA repair</keyword>
<keyword id="KW-0547">Nucleotide-binding</keyword>
<keyword id="KW-0539">Nucleus</keyword>
<keyword id="KW-1185">Reference proteome</keyword>
<keyword id="KW-0749">Sporulation</keyword>
<keyword id="KW-0804">Transcription</keyword>
<keyword id="KW-0805">Transcription regulation</keyword>
<keyword id="KW-0808">Transferase</keyword>
<keyword id="KW-0833">Ubl conjugation pathway</keyword>
<reference key="1">
    <citation type="journal article" date="2004" name="Nature">
        <title>Genome evolution in yeasts.</title>
        <authorList>
            <person name="Dujon B."/>
            <person name="Sherman D."/>
            <person name="Fischer G."/>
            <person name="Durrens P."/>
            <person name="Casaregola S."/>
            <person name="Lafontaine I."/>
            <person name="de Montigny J."/>
            <person name="Marck C."/>
            <person name="Neuveglise C."/>
            <person name="Talla E."/>
            <person name="Goffard N."/>
            <person name="Frangeul L."/>
            <person name="Aigle M."/>
            <person name="Anthouard V."/>
            <person name="Babour A."/>
            <person name="Barbe V."/>
            <person name="Barnay S."/>
            <person name="Blanchin S."/>
            <person name="Beckerich J.-M."/>
            <person name="Beyne E."/>
            <person name="Bleykasten C."/>
            <person name="Boisrame A."/>
            <person name="Boyer J."/>
            <person name="Cattolico L."/>
            <person name="Confanioleri F."/>
            <person name="de Daruvar A."/>
            <person name="Despons L."/>
            <person name="Fabre E."/>
            <person name="Fairhead C."/>
            <person name="Ferry-Dumazet H."/>
            <person name="Groppi A."/>
            <person name="Hantraye F."/>
            <person name="Hennequin C."/>
            <person name="Jauniaux N."/>
            <person name="Joyet P."/>
            <person name="Kachouri R."/>
            <person name="Kerrest A."/>
            <person name="Koszul R."/>
            <person name="Lemaire M."/>
            <person name="Lesur I."/>
            <person name="Ma L."/>
            <person name="Muller H."/>
            <person name="Nicaud J.-M."/>
            <person name="Nikolski M."/>
            <person name="Oztas S."/>
            <person name="Ozier-Kalogeropoulos O."/>
            <person name="Pellenz S."/>
            <person name="Potier S."/>
            <person name="Richard G.-F."/>
            <person name="Straub M.-L."/>
            <person name="Suleau A."/>
            <person name="Swennen D."/>
            <person name="Tekaia F."/>
            <person name="Wesolowski-Louvel M."/>
            <person name="Westhof E."/>
            <person name="Wirth B."/>
            <person name="Zeniou-Meyer M."/>
            <person name="Zivanovic Y."/>
            <person name="Bolotin-Fukuhara M."/>
            <person name="Thierry A."/>
            <person name="Bouchier C."/>
            <person name="Caudron B."/>
            <person name="Scarpelli C."/>
            <person name="Gaillardin C."/>
            <person name="Weissenbach J."/>
            <person name="Wincker P."/>
            <person name="Souciet J.-L."/>
        </authorList>
    </citation>
    <scope>NUCLEOTIDE SEQUENCE [LARGE SCALE GENOMIC DNA]</scope>
    <source>
        <strain>ATCC 36239 / CBS 767 / BCRC 21394 / JCM 1990 / NBRC 0083 / IGC 2968</strain>
    </source>
</reference>
<gene>
    <name type="primary">UBC2</name>
    <name type="ordered locus">DEHA2C13904g</name>
</gene>
<evidence type="ECO:0000250" key="1">
    <source>
        <dbReference type="UniProtKB" id="Q5VVX9"/>
    </source>
</evidence>
<evidence type="ECO:0000255" key="2">
    <source>
        <dbReference type="PROSITE-ProRule" id="PRU00388"/>
    </source>
</evidence>
<evidence type="ECO:0000255" key="3">
    <source>
        <dbReference type="PROSITE-ProRule" id="PRU10133"/>
    </source>
</evidence>
<evidence type="ECO:0000256" key="4">
    <source>
        <dbReference type="SAM" id="MobiDB-lite"/>
    </source>
</evidence>
<feature type="chain" id="PRO_0000082531" description="Ubiquitin-conjugating enzyme E2 2">
    <location>
        <begin position="1"/>
        <end position="168"/>
    </location>
</feature>
<feature type="domain" description="UBC core" evidence="2">
    <location>
        <begin position="4"/>
        <end position="150"/>
    </location>
</feature>
<feature type="region of interest" description="Disordered" evidence="4">
    <location>
        <begin position="143"/>
        <end position="168"/>
    </location>
</feature>
<feature type="compositionally biased region" description="Acidic residues" evidence="4">
    <location>
        <begin position="149"/>
        <end position="168"/>
    </location>
</feature>
<feature type="active site" description="Glycyl thioester intermediate" evidence="2 3">
    <location>
        <position position="88"/>
    </location>
</feature>